<protein>
    <recommendedName>
        <fullName evidence="4">Putative NBPF family member NBPF7</fullName>
    </recommendedName>
    <alternativeName>
        <fullName>Putative neuroblastoma breakpoint family member 7</fullName>
    </alternativeName>
</protein>
<organism>
    <name type="scientific">Homo sapiens</name>
    <name type="common">Human</name>
    <dbReference type="NCBI Taxonomy" id="9606"/>
    <lineage>
        <taxon>Eukaryota</taxon>
        <taxon>Metazoa</taxon>
        <taxon>Chordata</taxon>
        <taxon>Craniata</taxon>
        <taxon>Vertebrata</taxon>
        <taxon>Euteleostomi</taxon>
        <taxon>Mammalia</taxon>
        <taxon>Eutheria</taxon>
        <taxon>Euarchontoglires</taxon>
        <taxon>Primates</taxon>
        <taxon>Haplorrhini</taxon>
        <taxon>Catarrhini</taxon>
        <taxon>Hominidae</taxon>
        <taxon>Homo</taxon>
    </lineage>
</organism>
<reference key="1">
    <citation type="journal article" date="2006" name="Nature">
        <title>The DNA sequence and biological annotation of human chromosome 1.</title>
        <authorList>
            <person name="Gregory S.G."/>
            <person name="Barlow K.F."/>
            <person name="McLay K.E."/>
            <person name="Kaul R."/>
            <person name="Swarbreck D."/>
            <person name="Dunham A."/>
            <person name="Scott C.E."/>
            <person name="Howe K.L."/>
            <person name="Woodfine K."/>
            <person name="Spencer C.C.A."/>
            <person name="Jones M.C."/>
            <person name="Gillson C."/>
            <person name="Searle S."/>
            <person name="Zhou Y."/>
            <person name="Kokocinski F."/>
            <person name="McDonald L."/>
            <person name="Evans R."/>
            <person name="Phillips K."/>
            <person name="Atkinson A."/>
            <person name="Cooper R."/>
            <person name="Jones C."/>
            <person name="Hall R.E."/>
            <person name="Andrews T.D."/>
            <person name="Lloyd C."/>
            <person name="Ainscough R."/>
            <person name="Almeida J.P."/>
            <person name="Ambrose K.D."/>
            <person name="Anderson F."/>
            <person name="Andrew R.W."/>
            <person name="Ashwell R.I.S."/>
            <person name="Aubin K."/>
            <person name="Babbage A.K."/>
            <person name="Bagguley C.L."/>
            <person name="Bailey J."/>
            <person name="Beasley H."/>
            <person name="Bethel G."/>
            <person name="Bird C.P."/>
            <person name="Bray-Allen S."/>
            <person name="Brown J.Y."/>
            <person name="Brown A.J."/>
            <person name="Buckley D."/>
            <person name="Burton J."/>
            <person name="Bye J."/>
            <person name="Carder C."/>
            <person name="Chapman J.C."/>
            <person name="Clark S.Y."/>
            <person name="Clarke G."/>
            <person name="Clee C."/>
            <person name="Cobley V."/>
            <person name="Collier R.E."/>
            <person name="Corby N."/>
            <person name="Coville G.J."/>
            <person name="Davies J."/>
            <person name="Deadman R."/>
            <person name="Dunn M."/>
            <person name="Earthrowl M."/>
            <person name="Ellington A.G."/>
            <person name="Errington H."/>
            <person name="Frankish A."/>
            <person name="Frankland J."/>
            <person name="French L."/>
            <person name="Garner P."/>
            <person name="Garnett J."/>
            <person name="Gay L."/>
            <person name="Ghori M.R.J."/>
            <person name="Gibson R."/>
            <person name="Gilby L.M."/>
            <person name="Gillett W."/>
            <person name="Glithero R.J."/>
            <person name="Grafham D.V."/>
            <person name="Griffiths C."/>
            <person name="Griffiths-Jones S."/>
            <person name="Grocock R."/>
            <person name="Hammond S."/>
            <person name="Harrison E.S.I."/>
            <person name="Hart E."/>
            <person name="Haugen E."/>
            <person name="Heath P.D."/>
            <person name="Holmes S."/>
            <person name="Holt K."/>
            <person name="Howden P.J."/>
            <person name="Hunt A.R."/>
            <person name="Hunt S.E."/>
            <person name="Hunter G."/>
            <person name="Isherwood J."/>
            <person name="James R."/>
            <person name="Johnson C."/>
            <person name="Johnson D."/>
            <person name="Joy A."/>
            <person name="Kay M."/>
            <person name="Kershaw J.K."/>
            <person name="Kibukawa M."/>
            <person name="Kimberley A.M."/>
            <person name="King A."/>
            <person name="Knights A.J."/>
            <person name="Lad H."/>
            <person name="Laird G."/>
            <person name="Lawlor S."/>
            <person name="Leongamornlert D.A."/>
            <person name="Lloyd D.M."/>
            <person name="Loveland J."/>
            <person name="Lovell J."/>
            <person name="Lush M.J."/>
            <person name="Lyne R."/>
            <person name="Martin S."/>
            <person name="Mashreghi-Mohammadi M."/>
            <person name="Matthews L."/>
            <person name="Matthews N.S.W."/>
            <person name="McLaren S."/>
            <person name="Milne S."/>
            <person name="Mistry S."/>
            <person name="Moore M.J.F."/>
            <person name="Nickerson T."/>
            <person name="O'Dell C.N."/>
            <person name="Oliver K."/>
            <person name="Palmeiri A."/>
            <person name="Palmer S.A."/>
            <person name="Parker A."/>
            <person name="Patel D."/>
            <person name="Pearce A.V."/>
            <person name="Peck A.I."/>
            <person name="Pelan S."/>
            <person name="Phelps K."/>
            <person name="Phillimore B.J."/>
            <person name="Plumb R."/>
            <person name="Rajan J."/>
            <person name="Raymond C."/>
            <person name="Rouse G."/>
            <person name="Saenphimmachak C."/>
            <person name="Sehra H.K."/>
            <person name="Sheridan E."/>
            <person name="Shownkeen R."/>
            <person name="Sims S."/>
            <person name="Skuce C.D."/>
            <person name="Smith M."/>
            <person name="Steward C."/>
            <person name="Subramanian S."/>
            <person name="Sycamore N."/>
            <person name="Tracey A."/>
            <person name="Tromans A."/>
            <person name="Van Helmond Z."/>
            <person name="Wall M."/>
            <person name="Wallis J.M."/>
            <person name="White S."/>
            <person name="Whitehead S.L."/>
            <person name="Wilkinson J.E."/>
            <person name="Willey D.L."/>
            <person name="Williams H."/>
            <person name="Wilming L."/>
            <person name="Wray P.W."/>
            <person name="Wu Z."/>
            <person name="Coulson A."/>
            <person name="Vaudin M."/>
            <person name="Sulston J.E."/>
            <person name="Durbin R.M."/>
            <person name="Hubbard T."/>
            <person name="Wooster R."/>
            <person name="Dunham I."/>
            <person name="Carter N.P."/>
            <person name="McVean G."/>
            <person name="Ross M.T."/>
            <person name="Harrow J."/>
            <person name="Olson M.V."/>
            <person name="Beck S."/>
            <person name="Rogers J."/>
            <person name="Bentley D.R."/>
        </authorList>
    </citation>
    <scope>NUCLEOTIDE SEQUENCE [LARGE SCALE GENOMIC DNA]</scope>
</reference>
<accession>P0C2Y1</accession>
<sequence>MCLRFFSPVPGSTSSATNVTMVVSAGPWSSEKAEMNILEINEKLRPQLAENKQQFRNMKQKFLVTQMAGFLANQQNKYKYEECKDLIKSMLREELQFKEEKLAEQLKQAEELRQYKVLVHSQERELIQLREKLREGRDASHSLNQHLQALLTPDKHDNSQGQDFREQLAEGCRLARHLVHKLSPENDTDEDENDKTKELDKVQESPAPREEQKAEEKEVPEDSLEECAITYSNSHGPSDSNPPHKNIKITSEEDKVNSILVVDSESSQDEWQDALNILLENQNDDEEEEGKAPVPPQVTLWICGLKLQESEEKEVLQDSPEERVTTSCSDHDVSQSYQPCEGTFLALVEQKVCSAQDVASEHSNSKGEETPLGFPDTKYCWKDEKDERMSQKVAFLLDEKNYNSKPSSIPNTTLQGSFTED</sequence>
<comment type="subcellular location">
    <subcellularLocation>
        <location evidence="4">Cytoplasm</location>
    </subcellularLocation>
</comment>
<comment type="miscellaneous">
    <text>Encoded by one of the numerous copies of NBPF genes clustered in the p36, p12 and q21 region of the chromosome 1.</text>
</comment>
<comment type="similarity">
    <text evidence="4">Belongs to the NBPF family.</text>
</comment>
<comment type="caution">
    <text evidence="4">Could be the product of a pseudogene.</text>
</comment>
<proteinExistence type="uncertain"/>
<feature type="chain" id="PRO_0000288042" description="Putative NBPF family member NBPF7">
    <location>
        <begin position="1"/>
        <end position="421"/>
    </location>
</feature>
<feature type="domain" description="Olduvai 1" evidence="2">
    <location>
        <begin position="190"/>
        <end position="279"/>
    </location>
</feature>
<feature type="domain" description="Olduvai 2" evidence="2">
    <location>
        <begin position="280"/>
        <end position="391"/>
    </location>
</feature>
<feature type="region of interest" description="Disordered" evidence="3">
    <location>
        <begin position="179"/>
        <end position="251"/>
    </location>
</feature>
<feature type="region of interest" description="Disordered" evidence="3">
    <location>
        <begin position="312"/>
        <end position="334"/>
    </location>
</feature>
<feature type="region of interest" description="Disordered" evidence="3">
    <location>
        <begin position="402"/>
        <end position="421"/>
    </location>
</feature>
<feature type="coiled-coil region" evidence="1">
    <location>
        <begin position="87"/>
        <end position="143"/>
    </location>
</feature>
<feature type="compositionally biased region" description="Basic and acidic residues" evidence="3">
    <location>
        <begin position="194"/>
        <end position="217"/>
    </location>
</feature>
<feature type="compositionally biased region" description="Polar residues" evidence="3">
    <location>
        <begin position="230"/>
        <end position="243"/>
    </location>
</feature>
<feature type="compositionally biased region" description="Basic and acidic residues" evidence="3">
    <location>
        <begin position="312"/>
        <end position="333"/>
    </location>
</feature>
<feature type="compositionally biased region" description="Polar residues" evidence="3">
    <location>
        <begin position="403"/>
        <end position="421"/>
    </location>
</feature>
<feature type="sequence variant" id="VAR_032376" description="In dbSNP:rs6678923.">
    <original>E</original>
    <variation>D</variation>
    <location>
        <position position="170"/>
    </location>
</feature>
<keyword id="KW-0175">Coiled coil</keyword>
<keyword id="KW-0963">Cytoplasm</keyword>
<keyword id="KW-1185">Reference proteome</keyword>
<keyword id="KW-0677">Repeat</keyword>
<dbReference type="EMBL" id="AL359752">
    <property type="status" value="NOT_ANNOTATED_CDS"/>
    <property type="molecule type" value="Genomic_DNA"/>
</dbReference>
<dbReference type="RefSeq" id="NP_001041445.1">
    <property type="nucleotide sequence ID" value="NM_001047980.2"/>
</dbReference>
<dbReference type="SMR" id="P0C2Y1"/>
<dbReference type="IntAct" id="P0C2Y1">
    <property type="interactions" value="1"/>
</dbReference>
<dbReference type="iPTMnet" id="P0C2Y1"/>
<dbReference type="PhosphoSitePlus" id="P0C2Y1"/>
<dbReference type="BioMuta" id="HGNC:31989"/>
<dbReference type="MassIVE" id="P0C2Y1"/>
<dbReference type="PeptideAtlas" id="P0C2Y1"/>
<dbReference type="ProteomicsDB" id="52307"/>
<dbReference type="DNASU" id="343505"/>
<dbReference type="AGR" id="HGNC:31989"/>
<dbReference type="GeneCards" id="NBPF7P"/>
<dbReference type="HGNC" id="HGNC:31989">
    <property type="gene designation" value="NBPF7P"/>
</dbReference>
<dbReference type="MIM" id="613997">
    <property type="type" value="gene"/>
</dbReference>
<dbReference type="neXtProt" id="NX_P0C2Y1"/>
<dbReference type="InParanoid" id="P0C2Y1"/>
<dbReference type="PAN-GO" id="P0C2Y1">
    <property type="GO annotations" value="0 GO annotations based on evolutionary models"/>
</dbReference>
<dbReference type="PhylomeDB" id="P0C2Y1"/>
<dbReference type="PathwayCommons" id="P0C2Y1"/>
<dbReference type="BioGRID-ORCS" id="343505">
    <property type="hits" value="2 hits in 169 CRISPR screens"/>
</dbReference>
<dbReference type="GenomeRNAi" id="343505"/>
<dbReference type="Pharos" id="P0C2Y1">
    <property type="development level" value="Tdark"/>
</dbReference>
<dbReference type="Proteomes" id="UP000005640">
    <property type="component" value="Unplaced"/>
</dbReference>
<dbReference type="RNAct" id="P0C2Y1">
    <property type="molecule type" value="protein"/>
</dbReference>
<dbReference type="GO" id="GO:0005737">
    <property type="term" value="C:cytoplasm"/>
    <property type="evidence" value="ECO:0007669"/>
    <property type="project" value="UniProtKB-SubCell"/>
</dbReference>
<dbReference type="InterPro" id="IPR055306">
    <property type="entry name" value="NBPF"/>
</dbReference>
<dbReference type="InterPro" id="IPR010630">
    <property type="entry name" value="Olduvai_dom"/>
</dbReference>
<dbReference type="PANTHER" id="PTHR14199">
    <property type="entry name" value="NEUROBLASTOMA BREAKPOINT FAMILY MEMBER 6-LIKE PROTEIN"/>
    <property type="match status" value="1"/>
</dbReference>
<dbReference type="PANTHER" id="PTHR14199:SF42">
    <property type="entry name" value="NEUROBLASTOMA BREAKPOINT FAMILY MEMBER 7-RELATED"/>
    <property type="match status" value="1"/>
</dbReference>
<dbReference type="Pfam" id="PF06758">
    <property type="entry name" value="Olduvai"/>
    <property type="match status" value="2"/>
</dbReference>
<dbReference type="SMART" id="SM01148">
    <property type="entry name" value="DUF1220"/>
    <property type="match status" value="2"/>
</dbReference>
<dbReference type="PROSITE" id="PS51316">
    <property type="entry name" value="ODV"/>
    <property type="match status" value="2"/>
</dbReference>
<gene>
    <name evidence="5" type="primary">NBPF7P</name>
    <name type="synonym">NBPF7</name>
</gene>
<evidence type="ECO:0000255" key="1"/>
<evidence type="ECO:0000255" key="2">
    <source>
        <dbReference type="PROSITE-ProRule" id="PRU00647"/>
    </source>
</evidence>
<evidence type="ECO:0000256" key="3">
    <source>
        <dbReference type="SAM" id="MobiDB-lite"/>
    </source>
</evidence>
<evidence type="ECO:0000305" key="4"/>
<evidence type="ECO:0000312" key="5">
    <source>
        <dbReference type="HGNC" id="HGNC:31989"/>
    </source>
</evidence>
<name>NBPF7_HUMAN</name>